<reference key="1">
    <citation type="submission" date="2008-02" db="EMBL/GenBank/DDBJ databases">
        <title>Complete sequence of Shewanella woodyi ATCC 51908.</title>
        <authorList>
            <consortium name="US DOE Joint Genome Institute"/>
            <person name="Copeland A."/>
            <person name="Lucas S."/>
            <person name="Lapidus A."/>
            <person name="Glavina del Rio T."/>
            <person name="Dalin E."/>
            <person name="Tice H."/>
            <person name="Bruce D."/>
            <person name="Goodwin L."/>
            <person name="Pitluck S."/>
            <person name="Sims D."/>
            <person name="Brettin T."/>
            <person name="Detter J.C."/>
            <person name="Han C."/>
            <person name="Kuske C.R."/>
            <person name="Schmutz J."/>
            <person name="Larimer F."/>
            <person name="Land M."/>
            <person name="Hauser L."/>
            <person name="Kyrpides N."/>
            <person name="Lykidis A."/>
            <person name="Zhao J.-S."/>
            <person name="Richardson P."/>
        </authorList>
    </citation>
    <scope>NUCLEOTIDE SEQUENCE [LARGE SCALE GENOMIC DNA]</scope>
    <source>
        <strain>ATCC 51908 / MS32</strain>
    </source>
</reference>
<organism>
    <name type="scientific">Shewanella woodyi (strain ATCC 51908 / MS32)</name>
    <dbReference type="NCBI Taxonomy" id="392500"/>
    <lineage>
        <taxon>Bacteria</taxon>
        <taxon>Pseudomonadati</taxon>
        <taxon>Pseudomonadota</taxon>
        <taxon>Gammaproteobacteria</taxon>
        <taxon>Alteromonadales</taxon>
        <taxon>Shewanellaceae</taxon>
        <taxon>Shewanella</taxon>
    </lineage>
</organism>
<comment type="function">
    <text evidence="1">Nucleotide-binding protein.</text>
</comment>
<comment type="similarity">
    <text evidence="1">Belongs to the YajQ family.</text>
</comment>
<protein>
    <recommendedName>
        <fullName evidence="1">Nucleotide-binding protein Swoo_3646</fullName>
    </recommendedName>
</protein>
<proteinExistence type="inferred from homology"/>
<sequence length="161" mass="18311">MPSMDIVSEVDEVELRNAVDNSVRELKSRFDFRGKDASIEYKDHVVTLSAEDDFQCQQLVDILRMQLSKRNVDPASMDVDDKSVHSGKTFSLKVRFKEGIEVLTAKKLVKIIKDSKLKVQSSIQGDSVRVTGKKRDDLQAVMTLARESGLDQPFQFNNFRD</sequence>
<name>Y3646_SHEWM</name>
<keyword id="KW-0547">Nucleotide-binding</keyword>
<keyword id="KW-1185">Reference proteome</keyword>
<accession>B1KD73</accession>
<feature type="chain" id="PRO_1000130651" description="Nucleotide-binding protein Swoo_3646">
    <location>
        <begin position="1"/>
        <end position="161"/>
    </location>
</feature>
<evidence type="ECO:0000255" key="1">
    <source>
        <dbReference type="HAMAP-Rule" id="MF_00632"/>
    </source>
</evidence>
<gene>
    <name type="ordered locus">Swoo_3646</name>
</gene>
<dbReference type="EMBL" id="CP000961">
    <property type="protein sequence ID" value="ACA87908.1"/>
    <property type="molecule type" value="Genomic_DNA"/>
</dbReference>
<dbReference type="RefSeq" id="WP_012326241.1">
    <property type="nucleotide sequence ID" value="NC_010506.1"/>
</dbReference>
<dbReference type="SMR" id="B1KD73"/>
<dbReference type="STRING" id="392500.Swoo_3646"/>
<dbReference type="KEGG" id="swd:Swoo_3646"/>
<dbReference type="eggNOG" id="COG1666">
    <property type="taxonomic scope" value="Bacteria"/>
</dbReference>
<dbReference type="HOGENOM" id="CLU_099839_1_0_6"/>
<dbReference type="Proteomes" id="UP000002168">
    <property type="component" value="Chromosome"/>
</dbReference>
<dbReference type="GO" id="GO:0005829">
    <property type="term" value="C:cytosol"/>
    <property type="evidence" value="ECO:0007669"/>
    <property type="project" value="TreeGrafter"/>
</dbReference>
<dbReference type="GO" id="GO:0000166">
    <property type="term" value="F:nucleotide binding"/>
    <property type="evidence" value="ECO:0007669"/>
    <property type="project" value="TreeGrafter"/>
</dbReference>
<dbReference type="CDD" id="cd11740">
    <property type="entry name" value="YajQ_like"/>
    <property type="match status" value="1"/>
</dbReference>
<dbReference type="FunFam" id="3.30.70.860:FF:000001">
    <property type="entry name" value="UPF0234 protein YajQ"/>
    <property type="match status" value="1"/>
</dbReference>
<dbReference type="FunFam" id="3.30.70.990:FF:000001">
    <property type="entry name" value="UPF0234 protein YajQ"/>
    <property type="match status" value="1"/>
</dbReference>
<dbReference type="Gene3D" id="3.30.70.860">
    <property type="match status" value="1"/>
</dbReference>
<dbReference type="Gene3D" id="3.30.70.990">
    <property type="entry name" value="YajQ-like, domain 2"/>
    <property type="match status" value="1"/>
</dbReference>
<dbReference type="HAMAP" id="MF_00632">
    <property type="entry name" value="YajQ"/>
    <property type="match status" value="1"/>
</dbReference>
<dbReference type="InterPro" id="IPR007551">
    <property type="entry name" value="DUF520"/>
</dbReference>
<dbReference type="InterPro" id="IPR035571">
    <property type="entry name" value="UPF0234-like_C"/>
</dbReference>
<dbReference type="InterPro" id="IPR035570">
    <property type="entry name" value="UPF0234_N"/>
</dbReference>
<dbReference type="InterPro" id="IPR036183">
    <property type="entry name" value="YajQ-like_sf"/>
</dbReference>
<dbReference type="NCBIfam" id="NF003819">
    <property type="entry name" value="PRK05412.1"/>
    <property type="match status" value="1"/>
</dbReference>
<dbReference type="PANTHER" id="PTHR30476">
    <property type="entry name" value="UPF0234 PROTEIN YAJQ"/>
    <property type="match status" value="1"/>
</dbReference>
<dbReference type="PANTHER" id="PTHR30476:SF0">
    <property type="entry name" value="UPF0234 PROTEIN YAJQ"/>
    <property type="match status" value="1"/>
</dbReference>
<dbReference type="Pfam" id="PF04461">
    <property type="entry name" value="DUF520"/>
    <property type="match status" value="1"/>
</dbReference>
<dbReference type="SUPFAM" id="SSF89963">
    <property type="entry name" value="YajQ-like"/>
    <property type="match status" value="2"/>
</dbReference>